<sequence length="276" mass="31265">MTHPTELPLSPLSALQFYATAPYPCSYLDGRIARSQVATPSHLINSDIYTELVKAGFRRSGVFTYRPYCDGCRACVPVRVPVGEFAPTRTQRRMWKRHRALVATVSPLHYDEEHYALYMRYQSARHAGGGMDRDSRDQYEQFLLQSRINSRLVEFRDLDAPGGEPGKLRMVSMIDILGDGLSSVYTFFEPDDRHTSYGTYNILWQIEQAKSLGLPYVYLGYWIRESPKMAYKANFHPLEGLIDGRWKTLDPERIDLPPVDAALARAPLPGGHSGSG</sequence>
<accession>B1K0S5</accession>
<gene>
    <name evidence="1" type="primary">bpt</name>
    <name type="ordered locus">Bcenmc03_1531</name>
</gene>
<comment type="function">
    <text evidence="1">Functions in the N-end rule pathway of protein degradation where it conjugates Leu from its aminoacyl-tRNA to the N-termini of proteins containing an N-terminal aspartate or glutamate.</text>
</comment>
<comment type="catalytic activity">
    <reaction evidence="1">
        <text>N-terminal L-glutamyl-[protein] + L-leucyl-tRNA(Leu) = N-terminal L-leucyl-L-glutamyl-[protein] + tRNA(Leu) + H(+)</text>
        <dbReference type="Rhea" id="RHEA:50412"/>
        <dbReference type="Rhea" id="RHEA-COMP:9613"/>
        <dbReference type="Rhea" id="RHEA-COMP:9622"/>
        <dbReference type="Rhea" id="RHEA-COMP:12664"/>
        <dbReference type="Rhea" id="RHEA-COMP:12668"/>
        <dbReference type="ChEBI" id="CHEBI:15378"/>
        <dbReference type="ChEBI" id="CHEBI:64721"/>
        <dbReference type="ChEBI" id="CHEBI:78442"/>
        <dbReference type="ChEBI" id="CHEBI:78494"/>
        <dbReference type="ChEBI" id="CHEBI:133041"/>
        <dbReference type="EC" id="2.3.2.29"/>
    </reaction>
</comment>
<comment type="catalytic activity">
    <reaction evidence="1">
        <text>N-terminal L-aspartyl-[protein] + L-leucyl-tRNA(Leu) = N-terminal L-leucyl-L-aspartyl-[protein] + tRNA(Leu) + H(+)</text>
        <dbReference type="Rhea" id="RHEA:50420"/>
        <dbReference type="Rhea" id="RHEA-COMP:9613"/>
        <dbReference type="Rhea" id="RHEA-COMP:9622"/>
        <dbReference type="Rhea" id="RHEA-COMP:12669"/>
        <dbReference type="Rhea" id="RHEA-COMP:12674"/>
        <dbReference type="ChEBI" id="CHEBI:15378"/>
        <dbReference type="ChEBI" id="CHEBI:64720"/>
        <dbReference type="ChEBI" id="CHEBI:78442"/>
        <dbReference type="ChEBI" id="CHEBI:78494"/>
        <dbReference type="ChEBI" id="CHEBI:133042"/>
        <dbReference type="EC" id="2.3.2.29"/>
    </reaction>
</comment>
<comment type="subcellular location">
    <subcellularLocation>
        <location evidence="1">Cytoplasm</location>
    </subcellularLocation>
</comment>
<comment type="similarity">
    <text evidence="1">Belongs to the R-transferase family. Bpt subfamily.</text>
</comment>
<feature type="chain" id="PRO_1000131973" description="Aspartate/glutamate leucyltransferase">
    <location>
        <begin position="1"/>
        <end position="276"/>
    </location>
</feature>
<proteinExistence type="inferred from homology"/>
<keyword id="KW-0012">Acyltransferase</keyword>
<keyword id="KW-0963">Cytoplasm</keyword>
<keyword id="KW-0808">Transferase</keyword>
<name>BPT_BURO0</name>
<dbReference type="EC" id="2.3.2.29" evidence="1"/>
<dbReference type="EMBL" id="CP000958">
    <property type="protein sequence ID" value="ACA90706.1"/>
    <property type="molecule type" value="Genomic_DNA"/>
</dbReference>
<dbReference type="RefSeq" id="WP_006476113.1">
    <property type="nucleotide sequence ID" value="NC_010508.1"/>
</dbReference>
<dbReference type="SMR" id="B1K0S5"/>
<dbReference type="GeneID" id="83048330"/>
<dbReference type="KEGG" id="bcm:Bcenmc03_1531"/>
<dbReference type="HOGENOM" id="CLU_077607_0_0_4"/>
<dbReference type="Proteomes" id="UP000002169">
    <property type="component" value="Chromosome 1"/>
</dbReference>
<dbReference type="GO" id="GO:0005737">
    <property type="term" value="C:cytoplasm"/>
    <property type="evidence" value="ECO:0007669"/>
    <property type="project" value="UniProtKB-SubCell"/>
</dbReference>
<dbReference type="GO" id="GO:0004057">
    <property type="term" value="F:arginyl-tRNA--protein transferase activity"/>
    <property type="evidence" value="ECO:0007669"/>
    <property type="project" value="InterPro"/>
</dbReference>
<dbReference type="GO" id="GO:0008914">
    <property type="term" value="F:leucyl-tRNA--protein transferase activity"/>
    <property type="evidence" value="ECO:0007669"/>
    <property type="project" value="UniProtKB-UniRule"/>
</dbReference>
<dbReference type="GO" id="GO:0071596">
    <property type="term" value="P:ubiquitin-dependent protein catabolic process via the N-end rule pathway"/>
    <property type="evidence" value="ECO:0007669"/>
    <property type="project" value="InterPro"/>
</dbReference>
<dbReference type="HAMAP" id="MF_00689">
    <property type="entry name" value="Bpt"/>
    <property type="match status" value="1"/>
</dbReference>
<dbReference type="InterPro" id="IPR016181">
    <property type="entry name" value="Acyl_CoA_acyltransferase"/>
</dbReference>
<dbReference type="InterPro" id="IPR017138">
    <property type="entry name" value="Asp_Glu_LeuTrfase"/>
</dbReference>
<dbReference type="InterPro" id="IPR030700">
    <property type="entry name" value="N-end_Aminoacyl_Trfase"/>
</dbReference>
<dbReference type="InterPro" id="IPR007472">
    <property type="entry name" value="N-end_Aminoacyl_Trfase_C"/>
</dbReference>
<dbReference type="InterPro" id="IPR007471">
    <property type="entry name" value="N-end_Aminoacyl_Trfase_N"/>
</dbReference>
<dbReference type="NCBIfam" id="NF002341">
    <property type="entry name" value="PRK01305.1-1"/>
    <property type="match status" value="1"/>
</dbReference>
<dbReference type="NCBIfam" id="NF002342">
    <property type="entry name" value="PRK01305.1-3"/>
    <property type="match status" value="1"/>
</dbReference>
<dbReference type="NCBIfam" id="NF002346">
    <property type="entry name" value="PRK01305.2-3"/>
    <property type="match status" value="1"/>
</dbReference>
<dbReference type="PANTHER" id="PTHR21367">
    <property type="entry name" value="ARGININE-TRNA-PROTEIN TRANSFERASE 1"/>
    <property type="match status" value="1"/>
</dbReference>
<dbReference type="PANTHER" id="PTHR21367:SF1">
    <property type="entry name" value="ARGINYL-TRNA--PROTEIN TRANSFERASE 1"/>
    <property type="match status" value="1"/>
</dbReference>
<dbReference type="Pfam" id="PF04377">
    <property type="entry name" value="ATE_C"/>
    <property type="match status" value="1"/>
</dbReference>
<dbReference type="Pfam" id="PF04376">
    <property type="entry name" value="ATE_N"/>
    <property type="match status" value="1"/>
</dbReference>
<dbReference type="PIRSF" id="PIRSF037208">
    <property type="entry name" value="ATE_pro_prd"/>
    <property type="match status" value="1"/>
</dbReference>
<dbReference type="SUPFAM" id="SSF55729">
    <property type="entry name" value="Acyl-CoA N-acyltransferases (Nat)"/>
    <property type="match status" value="1"/>
</dbReference>
<reference key="1">
    <citation type="submission" date="2008-02" db="EMBL/GenBank/DDBJ databases">
        <title>Complete sequence of chromosome 1 of Burkholderia cenocepacia MC0-3.</title>
        <authorList>
            <person name="Copeland A."/>
            <person name="Lucas S."/>
            <person name="Lapidus A."/>
            <person name="Barry K."/>
            <person name="Bruce D."/>
            <person name="Goodwin L."/>
            <person name="Glavina del Rio T."/>
            <person name="Dalin E."/>
            <person name="Tice H."/>
            <person name="Pitluck S."/>
            <person name="Chain P."/>
            <person name="Malfatti S."/>
            <person name="Shin M."/>
            <person name="Vergez L."/>
            <person name="Schmutz J."/>
            <person name="Larimer F."/>
            <person name="Land M."/>
            <person name="Hauser L."/>
            <person name="Kyrpides N."/>
            <person name="Mikhailova N."/>
            <person name="Tiedje J."/>
            <person name="Richardson P."/>
        </authorList>
    </citation>
    <scope>NUCLEOTIDE SEQUENCE [LARGE SCALE GENOMIC DNA]</scope>
    <source>
        <strain>MC0-3</strain>
    </source>
</reference>
<evidence type="ECO:0000255" key="1">
    <source>
        <dbReference type="HAMAP-Rule" id="MF_00689"/>
    </source>
</evidence>
<protein>
    <recommendedName>
        <fullName evidence="1">Aspartate/glutamate leucyltransferase</fullName>
        <ecNumber evidence="1">2.3.2.29</ecNumber>
    </recommendedName>
</protein>
<organism>
    <name type="scientific">Burkholderia orbicola (strain MC0-3)</name>
    <dbReference type="NCBI Taxonomy" id="406425"/>
    <lineage>
        <taxon>Bacteria</taxon>
        <taxon>Pseudomonadati</taxon>
        <taxon>Pseudomonadota</taxon>
        <taxon>Betaproteobacteria</taxon>
        <taxon>Burkholderiales</taxon>
        <taxon>Burkholderiaceae</taxon>
        <taxon>Burkholderia</taxon>
        <taxon>Burkholderia cepacia complex</taxon>
        <taxon>Burkholderia orbicola</taxon>
    </lineage>
</organism>